<dbReference type="EMBL" id="CP000057">
    <property type="protein sequence ID" value="AAX87991.1"/>
    <property type="molecule type" value="Genomic_DNA"/>
</dbReference>
<dbReference type="RefSeq" id="WP_005542826.1">
    <property type="nucleotide sequence ID" value="NC_007146.2"/>
</dbReference>
<dbReference type="SMR" id="Q4QLV6"/>
<dbReference type="GeneID" id="93219990"/>
<dbReference type="KEGG" id="hit:NTHI1124"/>
<dbReference type="HOGENOM" id="CLU_064548_3_1_6"/>
<dbReference type="Proteomes" id="UP000002525">
    <property type="component" value="Chromosome"/>
</dbReference>
<dbReference type="GO" id="GO:0022625">
    <property type="term" value="C:cytosolic large ribosomal subunit"/>
    <property type="evidence" value="ECO:0007669"/>
    <property type="project" value="TreeGrafter"/>
</dbReference>
<dbReference type="GO" id="GO:0003735">
    <property type="term" value="F:structural constituent of ribosome"/>
    <property type="evidence" value="ECO:0007669"/>
    <property type="project" value="InterPro"/>
</dbReference>
<dbReference type="GO" id="GO:0006412">
    <property type="term" value="P:translation"/>
    <property type="evidence" value="ECO:0007669"/>
    <property type="project" value="UniProtKB-UniRule"/>
</dbReference>
<dbReference type="FunFam" id="2.30.170.40:FF:000001">
    <property type="entry name" value="50S ribosomal protein L28"/>
    <property type="match status" value="1"/>
</dbReference>
<dbReference type="Gene3D" id="2.30.170.40">
    <property type="entry name" value="Ribosomal protein L28/L24"/>
    <property type="match status" value="1"/>
</dbReference>
<dbReference type="HAMAP" id="MF_00373">
    <property type="entry name" value="Ribosomal_bL28"/>
    <property type="match status" value="1"/>
</dbReference>
<dbReference type="InterPro" id="IPR026569">
    <property type="entry name" value="Ribosomal_bL28"/>
</dbReference>
<dbReference type="InterPro" id="IPR034704">
    <property type="entry name" value="Ribosomal_bL28/bL31-like_sf"/>
</dbReference>
<dbReference type="InterPro" id="IPR001383">
    <property type="entry name" value="Ribosomal_bL28_bact-type"/>
</dbReference>
<dbReference type="InterPro" id="IPR037147">
    <property type="entry name" value="Ribosomal_bL28_sf"/>
</dbReference>
<dbReference type="NCBIfam" id="TIGR00009">
    <property type="entry name" value="L28"/>
    <property type="match status" value="1"/>
</dbReference>
<dbReference type="PANTHER" id="PTHR13528">
    <property type="entry name" value="39S RIBOSOMAL PROTEIN L28, MITOCHONDRIAL"/>
    <property type="match status" value="1"/>
</dbReference>
<dbReference type="PANTHER" id="PTHR13528:SF2">
    <property type="entry name" value="LARGE RIBOSOMAL SUBUNIT PROTEIN BL28M"/>
    <property type="match status" value="1"/>
</dbReference>
<dbReference type="Pfam" id="PF00830">
    <property type="entry name" value="Ribosomal_L28"/>
    <property type="match status" value="1"/>
</dbReference>
<dbReference type="SUPFAM" id="SSF143800">
    <property type="entry name" value="L28p-like"/>
    <property type="match status" value="1"/>
</dbReference>
<feature type="chain" id="PRO_1000007246" description="Large ribosomal subunit protein bL28">
    <location>
        <begin position="1"/>
        <end position="78"/>
    </location>
</feature>
<comment type="similarity">
    <text evidence="1">Belongs to the bacterial ribosomal protein bL28 family.</text>
</comment>
<sequence length="78" mass="8985">MSRVCQVTGKRPAVGNNRSHAMNATRRRFLPNLHTHRFWVESENRFVTLRLTAKGMRIIDKKGIDAVLAEIRARGEKI</sequence>
<name>RL28_HAEI8</name>
<reference key="1">
    <citation type="journal article" date="2005" name="J. Bacteriol.">
        <title>Genomic sequence of an otitis media isolate of nontypeable Haemophilus influenzae: comparative study with H. influenzae serotype d, strain KW20.</title>
        <authorList>
            <person name="Harrison A."/>
            <person name="Dyer D.W."/>
            <person name="Gillaspy A."/>
            <person name="Ray W.C."/>
            <person name="Mungur R."/>
            <person name="Carson M.B."/>
            <person name="Zhong H."/>
            <person name="Gipson J."/>
            <person name="Gipson M."/>
            <person name="Johnson L.S."/>
            <person name="Lewis L."/>
            <person name="Bakaletz L.O."/>
            <person name="Munson R.S. Jr."/>
        </authorList>
    </citation>
    <scope>NUCLEOTIDE SEQUENCE [LARGE SCALE GENOMIC DNA]</scope>
    <source>
        <strain>86-028NP</strain>
    </source>
</reference>
<protein>
    <recommendedName>
        <fullName evidence="1">Large ribosomal subunit protein bL28</fullName>
    </recommendedName>
    <alternativeName>
        <fullName evidence="2">50S ribosomal protein L28</fullName>
    </alternativeName>
</protein>
<gene>
    <name evidence="1" type="primary">rpmB</name>
    <name type="ordered locus">NTHI1124</name>
</gene>
<proteinExistence type="inferred from homology"/>
<keyword id="KW-0687">Ribonucleoprotein</keyword>
<keyword id="KW-0689">Ribosomal protein</keyword>
<organism>
    <name type="scientific">Haemophilus influenzae (strain 86-028NP)</name>
    <dbReference type="NCBI Taxonomy" id="281310"/>
    <lineage>
        <taxon>Bacteria</taxon>
        <taxon>Pseudomonadati</taxon>
        <taxon>Pseudomonadota</taxon>
        <taxon>Gammaproteobacteria</taxon>
        <taxon>Pasteurellales</taxon>
        <taxon>Pasteurellaceae</taxon>
        <taxon>Haemophilus</taxon>
    </lineage>
</organism>
<accession>Q4QLV6</accession>
<evidence type="ECO:0000255" key="1">
    <source>
        <dbReference type="HAMAP-Rule" id="MF_00373"/>
    </source>
</evidence>
<evidence type="ECO:0000305" key="2"/>